<sequence length="130" mass="14487">MDTMDTMGRHVIAELWDCDFDKLNDMPYIEQLFVDAALRAGAEVREVAFHKFAPQGVSGVVIISESHLTIHSFPEHGYASIDVYTCGDRIDPNVAAEYIAEGLNAKTRESIELPRGTGSFEIKQRETKAL</sequence>
<keyword id="KW-0068">Autocatalytic cleavage</keyword>
<keyword id="KW-0210">Decarboxylase</keyword>
<keyword id="KW-0456">Lyase</keyword>
<keyword id="KW-0620">Polyamine biosynthesis</keyword>
<keyword id="KW-0670">Pyruvate</keyword>
<keyword id="KW-1185">Reference proteome</keyword>
<keyword id="KW-0949">S-adenosyl-L-methionine</keyword>
<keyword id="KW-0704">Schiff base</keyword>
<keyword id="KW-0745">Spermidine biosynthesis</keyword>
<keyword id="KW-0865">Zymogen</keyword>
<organism>
    <name type="scientific">Bacillus anthracis</name>
    <dbReference type="NCBI Taxonomy" id="1392"/>
    <lineage>
        <taxon>Bacteria</taxon>
        <taxon>Bacillati</taxon>
        <taxon>Bacillota</taxon>
        <taxon>Bacilli</taxon>
        <taxon>Bacillales</taxon>
        <taxon>Bacillaceae</taxon>
        <taxon>Bacillus</taxon>
        <taxon>Bacillus cereus group</taxon>
    </lineage>
</organism>
<comment type="function">
    <text evidence="2">Catalyzes the decarboxylation of S-adenosylmethionine to S-adenosylmethioninamine (dcAdoMet), the propylamine donor required for the synthesis of the polyamines spermine and spermidine from the diamine putrescine.</text>
</comment>
<comment type="catalytic activity">
    <reaction evidence="2">
        <text>S-adenosyl-L-methionine + H(+) = S-adenosyl 3-(methylsulfanyl)propylamine + CO2</text>
        <dbReference type="Rhea" id="RHEA:15981"/>
        <dbReference type="ChEBI" id="CHEBI:15378"/>
        <dbReference type="ChEBI" id="CHEBI:16526"/>
        <dbReference type="ChEBI" id="CHEBI:57443"/>
        <dbReference type="ChEBI" id="CHEBI:59789"/>
        <dbReference type="EC" id="4.1.1.50"/>
    </reaction>
</comment>
<comment type="cofactor">
    <cofactor evidence="2">
        <name>pyruvate</name>
        <dbReference type="ChEBI" id="CHEBI:15361"/>
    </cofactor>
    <text evidence="2">Binds 1 pyruvoyl group covalently per subunit.</text>
</comment>
<comment type="pathway">
    <text evidence="2">Amine and polyamine biosynthesis; S-adenosylmethioninamine biosynthesis; S-adenosylmethioninamine from S-adenosyl-L-methionine: step 1/1.</text>
</comment>
<comment type="subunit">
    <text evidence="2">Heterotetramer of two alpha and two beta chains arranged as a dimer of alpha/beta heterodimers.</text>
</comment>
<comment type="PTM">
    <text evidence="2">Is synthesized initially as an inactive proenzyme. Formation of the active enzyme involves a self-maturation process in which the active site pyruvoyl group is generated from an internal serine residue via an autocatalytic post-translational modification. Two non-identical subunits are generated from the proenzyme in this reaction, and the pyruvate is formed at the N-terminus of the alpha chain, which is derived from the carboxyl end of the proenzyme. The post-translation cleavage follows an unusual pathway, termed non-hydrolytic serinolysis, in which the side chain hydroxyl group of the serine supplies its oxygen atom to form the C-terminus of the beta chain, while the remainder of the serine residue undergoes an oxidative deamination to produce ammonia and the pyruvoyl group blocking the N-terminus of the alpha chain.</text>
</comment>
<comment type="similarity">
    <text evidence="2">Belongs to the prokaryotic AdoMetDC family. Type 1 subfamily.</text>
</comment>
<reference key="1">
    <citation type="journal article" date="2003" name="Nature">
        <title>The genome sequence of Bacillus anthracis Ames and comparison to closely related bacteria.</title>
        <authorList>
            <person name="Read T.D."/>
            <person name="Peterson S.N."/>
            <person name="Tourasse N.J."/>
            <person name="Baillie L.W."/>
            <person name="Paulsen I.T."/>
            <person name="Nelson K.E."/>
            <person name="Tettelin H."/>
            <person name="Fouts D.E."/>
            <person name="Eisen J.A."/>
            <person name="Gill S.R."/>
            <person name="Holtzapple E.K."/>
            <person name="Okstad O.A."/>
            <person name="Helgason E."/>
            <person name="Rilstone J."/>
            <person name="Wu M."/>
            <person name="Kolonay J.F."/>
            <person name="Beanan M.J."/>
            <person name="Dodson R.J."/>
            <person name="Brinkac L.M."/>
            <person name="Gwinn M.L."/>
            <person name="DeBoy R.T."/>
            <person name="Madpu R."/>
            <person name="Daugherty S.C."/>
            <person name="Durkin A.S."/>
            <person name="Haft D.H."/>
            <person name="Nelson W.C."/>
            <person name="Peterson J.D."/>
            <person name="Pop M."/>
            <person name="Khouri H.M."/>
            <person name="Radune D."/>
            <person name="Benton J.L."/>
            <person name="Mahamoud Y."/>
            <person name="Jiang L."/>
            <person name="Hance I.R."/>
            <person name="Weidman J.F."/>
            <person name="Berry K.J."/>
            <person name="Plaut R.D."/>
            <person name="Wolf A.M."/>
            <person name="Watkins K.L."/>
            <person name="Nierman W.C."/>
            <person name="Hazen A."/>
            <person name="Cline R.T."/>
            <person name="Redmond C."/>
            <person name="Thwaite J.E."/>
            <person name="White O."/>
            <person name="Salzberg S.L."/>
            <person name="Thomason B."/>
            <person name="Friedlander A.M."/>
            <person name="Koehler T.M."/>
            <person name="Hanna P.C."/>
            <person name="Kolstoe A.-B."/>
            <person name="Fraser C.M."/>
        </authorList>
    </citation>
    <scope>NUCLEOTIDE SEQUENCE [LARGE SCALE GENOMIC DNA]</scope>
    <source>
        <strain>Ames / isolate Porton</strain>
    </source>
</reference>
<reference key="2">
    <citation type="journal article" date="2009" name="J. Bacteriol.">
        <title>The complete genome sequence of Bacillus anthracis Ames 'Ancestor'.</title>
        <authorList>
            <person name="Ravel J."/>
            <person name="Jiang L."/>
            <person name="Stanley S.T."/>
            <person name="Wilson M.R."/>
            <person name="Decker R.S."/>
            <person name="Read T.D."/>
            <person name="Worsham P."/>
            <person name="Keim P.S."/>
            <person name="Salzberg S.L."/>
            <person name="Fraser-Liggett C.M."/>
            <person name="Rasko D.A."/>
        </authorList>
    </citation>
    <scope>NUCLEOTIDE SEQUENCE [LARGE SCALE GENOMIC DNA]</scope>
    <source>
        <strain>Ames ancestor</strain>
    </source>
</reference>
<reference key="3">
    <citation type="submission" date="2004-01" db="EMBL/GenBank/DDBJ databases">
        <title>Complete genome sequence of Bacillus anthracis Sterne.</title>
        <authorList>
            <person name="Brettin T.S."/>
            <person name="Bruce D."/>
            <person name="Challacombe J.F."/>
            <person name="Gilna P."/>
            <person name="Han C."/>
            <person name="Hill K."/>
            <person name="Hitchcock P."/>
            <person name="Jackson P."/>
            <person name="Keim P."/>
            <person name="Longmire J."/>
            <person name="Lucas S."/>
            <person name="Okinaka R."/>
            <person name="Richardson P."/>
            <person name="Rubin E."/>
            <person name="Tice H."/>
        </authorList>
    </citation>
    <scope>NUCLEOTIDE SEQUENCE [LARGE SCALE GENOMIC DNA]</scope>
    <source>
        <strain>Sterne</strain>
    </source>
</reference>
<feature type="chain" id="PRO_0000030081" description="S-adenosylmethionine decarboxylase 1 beta chain" evidence="1">
    <location>
        <begin position="1"/>
        <end position="65"/>
    </location>
</feature>
<feature type="chain" id="PRO_0000030082" description="S-adenosylmethionine decarboxylase 1 alpha chain" evidence="1">
    <location>
        <begin position="66"/>
        <end position="130"/>
    </location>
</feature>
<feature type="active site" description="Schiff-base intermediate with substrate; via pyruvic acid" evidence="2">
    <location>
        <position position="66"/>
    </location>
</feature>
<feature type="active site" description="Proton acceptor; for processing activity" evidence="2">
    <location>
        <position position="71"/>
    </location>
</feature>
<feature type="active site" description="Proton donor; for catalytic activity" evidence="2">
    <location>
        <position position="86"/>
    </location>
</feature>
<feature type="site" description="Cleavage (non-hydrolytic); by autolysis" evidence="2">
    <location>
        <begin position="65"/>
        <end position="66"/>
    </location>
</feature>
<feature type="modified residue" description="Pyruvic acid (Ser); by autocatalysis" evidence="2">
    <location>
        <position position="66"/>
    </location>
</feature>
<protein>
    <recommendedName>
        <fullName evidence="2">S-adenosylmethionine decarboxylase proenzyme 1</fullName>
        <shortName evidence="2">AdoMetDC 1</shortName>
        <shortName evidence="2">SAMDC 1</shortName>
        <ecNumber evidence="2">4.1.1.50</ecNumber>
    </recommendedName>
    <component>
        <recommendedName>
            <fullName>S-adenosylmethionine decarboxylase 1 beta chain</fullName>
        </recommendedName>
    </component>
    <component>
        <recommendedName>
            <fullName>S-adenosylmethionine decarboxylase 1 alpha chain</fullName>
        </recommendedName>
    </component>
</protein>
<accession>Q81L09</accession>
<accession>Q6HSG4</accession>
<accession>Q6KLQ9</accession>
<gene>
    <name evidence="2" type="primary">speH1</name>
    <name type="synonym">speD-1</name>
    <name type="ordered locus">BA_4825</name>
    <name type="ordered locus">GBAA_4825</name>
    <name type="ordered locus">BAS4477</name>
</gene>
<dbReference type="EC" id="4.1.1.50" evidence="2"/>
<dbReference type="EMBL" id="AE016879">
    <property type="protein sequence ID" value="AAP28514.1"/>
    <property type="molecule type" value="Genomic_DNA"/>
</dbReference>
<dbReference type="EMBL" id="AE017334">
    <property type="protein sequence ID" value="AAT33946.1"/>
    <property type="molecule type" value="Genomic_DNA"/>
</dbReference>
<dbReference type="EMBL" id="AE017225">
    <property type="protein sequence ID" value="AAT56775.1"/>
    <property type="molecule type" value="Genomic_DNA"/>
</dbReference>
<dbReference type="RefSeq" id="NP_847028.1">
    <property type="nucleotide sequence ID" value="NC_003997.3"/>
</dbReference>
<dbReference type="RefSeq" id="YP_030724.1">
    <property type="nucleotide sequence ID" value="NC_005945.1"/>
</dbReference>
<dbReference type="SMR" id="Q81L09"/>
<dbReference type="STRING" id="261594.GBAA_4825"/>
<dbReference type="DNASU" id="1083964"/>
<dbReference type="KEGG" id="ban:BA_4825"/>
<dbReference type="KEGG" id="bar:GBAA_4825"/>
<dbReference type="KEGG" id="bat:BAS4477"/>
<dbReference type="PATRIC" id="fig|198094.11.peg.4786"/>
<dbReference type="eggNOG" id="COG1586">
    <property type="taxonomic scope" value="Bacteria"/>
</dbReference>
<dbReference type="HOGENOM" id="CLU_125470_2_3_9"/>
<dbReference type="OMA" id="HTWPEKG"/>
<dbReference type="OrthoDB" id="9793120at2"/>
<dbReference type="UniPathway" id="UPA00331">
    <property type="reaction ID" value="UER00451"/>
</dbReference>
<dbReference type="Proteomes" id="UP000000427">
    <property type="component" value="Chromosome"/>
</dbReference>
<dbReference type="Proteomes" id="UP000000594">
    <property type="component" value="Chromosome"/>
</dbReference>
<dbReference type="GO" id="GO:0005829">
    <property type="term" value="C:cytosol"/>
    <property type="evidence" value="ECO:0007669"/>
    <property type="project" value="TreeGrafter"/>
</dbReference>
<dbReference type="GO" id="GO:0004014">
    <property type="term" value="F:adenosylmethionine decarboxylase activity"/>
    <property type="evidence" value="ECO:0007669"/>
    <property type="project" value="UniProtKB-UniRule"/>
</dbReference>
<dbReference type="GO" id="GO:0008295">
    <property type="term" value="P:spermidine biosynthetic process"/>
    <property type="evidence" value="ECO:0007669"/>
    <property type="project" value="UniProtKB-UniRule"/>
</dbReference>
<dbReference type="FunFam" id="3.30.160.750:FF:000001">
    <property type="entry name" value="S-adenosylmethionine decarboxylase proenzyme"/>
    <property type="match status" value="1"/>
</dbReference>
<dbReference type="FunFam" id="3.30.360.110:FF:000001">
    <property type="entry name" value="S-adenosylmethionine decarboxylase proenzyme"/>
    <property type="match status" value="1"/>
</dbReference>
<dbReference type="Gene3D" id="3.30.160.750">
    <property type="match status" value="1"/>
</dbReference>
<dbReference type="Gene3D" id="3.30.360.110">
    <property type="entry name" value="S-adenosylmethionine decarboxylase domain"/>
    <property type="match status" value="1"/>
</dbReference>
<dbReference type="HAMAP" id="MF_00464">
    <property type="entry name" value="AdoMetDC_1"/>
    <property type="match status" value="1"/>
</dbReference>
<dbReference type="InterPro" id="IPR042286">
    <property type="entry name" value="AdoMetDC_C"/>
</dbReference>
<dbReference type="InterPro" id="IPR003826">
    <property type="entry name" value="AdoMetDC_fam_prok"/>
</dbReference>
<dbReference type="InterPro" id="IPR042284">
    <property type="entry name" value="AdoMetDC_N"/>
</dbReference>
<dbReference type="InterPro" id="IPR016067">
    <property type="entry name" value="S-AdoMet_deCO2ase_core"/>
</dbReference>
<dbReference type="InterPro" id="IPR017716">
    <property type="entry name" value="S-AdoMet_deCOase_pro-enz"/>
</dbReference>
<dbReference type="NCBIfam" id="TIGR03330">
    <property type="entry name" value="SAM_DCase_Bsu"/>
    <property type="match status" value="1"/>
</dbReference>
<dbReference type="PANTHER" id="PTHR33866">
    <property type="entry name" value="S-ADENOSYLMETHIONINE DECARBOXYLASE PROENZYME"/>
    <property type="match status" value="1"/>
</dbReference>
<dbReference type="PANTHER" id="PTHR33866:SF2">
    <property type="entry name" value="S-ADENOSYLMETHIONINE DECARBOXYLASE PROENZYME"/>
    <property type="match status" value="1"/>
</dbReference>
<dbReference type="Pfam" id="PF02675">
    <property type="entry name" value="AdoMet_dc"/>
    <property type="match status" value="1"/>
</dbReference>
<dbReference type="SUPFAM" id="SSF56276">
    <property type="entry name" value="S-adenosylmethionine decarboxylase"/>
    <property type="match status" value="1"/>
</dbReference>
<evidence type="ECO:0000250" key="1"/>
<evidence type="ECO:0000255" key="2">
    <source>
        <dbReference type="HAMAP-Rule" id="MF_00464"/>
    </source>
</evidence>
<name>SPEH1_BACAN</name>
<proteinExistence type="inferred from homology"/>